<name>RUVB_LACJO</name>
<organism>
    <name type="scientific">Lactobacillus johnsonii (strain CNCM I-12250 / La1 / NCC 533)</name>
    <dbReference type="NCBI Taxonomy" id="257314"/>
    <lineage>
        <taxon>Bacteria</taxon>
        <taxon>Bacillati</taxon>
        <taxon>Bacillota</taxon>
        <taxon>Bacilli</taxon>
        <taxon>Lactobacillales</taxon>
        <taxon>Lactobacillaceae</taxon>
        <taxon>Lactobacillus</taxon>
    </lineage>
</organism>
<proteinExistence type="inferred from homology"/>
<comment type="function">
    <text evidence="1">The RuvA-RuvB-RuvC complex processes Holliday junction (HJ) DNA during genetic recombination and DNA repair, while the RuvA-RuvB complex plays an important role in the rescue of blocked DNA replication forks via replication fork reversal (RFR). RuvA specifically binds to HJ cruciform DNA, conferring on it an open structure. The RuvB hexamer acts as an ATP-dependent pump, pulling dsDNA into and through the RuvAB complex. RuvB forms 2 homohexamers on either side of HJ DNA bound by 1 or 2 RuvA tetramers; 4 subunits per hexamer contact DNA at a time. Coordinated motions by a converter formed by DNA-disengaged RuvB subunits stimulates ATP hydrolysis and nucleotide exchange. Immobilization of the converter enables RuvB to convert the ATP-contained energy into a lever motion, pulling 2 nucleotides of DNA out of the RuvA tetramer per ATP hydrolyzed, thus driving DNA branch migration. The RuvB motors rotate together with the DNA substrate, which together with the progressing nucleotide cycle form the mechanistic basis for DNA recombination by continuous HJ branch migration. Branch migration allows RuvC to scan DNA until it finds its consensus sequence, where it cleaves and resolves cruciform DNA.</text>
</comment>
<comment type="catalytic activity">
    <reaction evidence="1">
        <text>ATP + H2O = ADP + phosphate + H(+)</text>
        <dbReference type="Rhea" id="RHEA:13065"/>
        <dbReference type="ChEBI" id="CHEBI:15377"/>
        <dbReference type="ChEBI" id="CHEBI:15378"/>
        <dbReference type="ChEBI" id="CHEBI:30616"/>
        <dbReference type="ChEBI" id="CHEBI:43474"/>
        <dbReference type="ChEBI" id="CHEBI:456216"/>
    </reaction>
</comment>
<comment type="subunit">
    <text evidence="1">Homohexamer. Forms an RuvA(8)-RuvB(12)-Holliday junction (HJ) complex. HJ DNA is sandwiched between 2 RuvA tetramers; dsDNA enters through RuvA and exits via RuvB. An RuvB hexamer assembles on each DNA strand where it exits the tetramer. Each RuvB hexamer is contacted by two RuvA subunits (via domain III) on 2 adjacent RuvB subunits; this complex drives branch migration. In the full resolvosome a probable DNA-RuvA(4)-RuvB(12)-RuvC(2) complex forms which resolves the HJ.</text>
</comment>
<comment type="subcellular location">
    <subcellularLocation>
        <location evidence="1">Cytoplasm</location>
    </subcellularLocation>
</comment>
<comment type="domain">
    <text evidence="1">Has 3 domains, the large (RuvB-L) and small ATPase (RuvB-S) domains and the C-terminal head (RuvB-H) domain. The head domain binds DNA, while the ATPase domains jointly bind ATP, ADP or are empty depending on the state of the subunit in the translocation cycle. During a single DNA translocation step the structure of each domain remains the same, but their relative positions change.</text>
</comment>
<comment type="similarity">
    <text evidence="1">Belongs to the RuvB family.</text>
</comment>
<feature type="chain" id="PRO_0000165542" description="Holliday junction branch migration complex subunit RuvB">
    <location>
        <begin position="1"/>
        <end position="339"/>
    </location>
</feature>
<feature type="region of interest" description="Large ATPase domain (RuvB-L)" evidence="1">
    <location>
        <begin position="2"/>
        <end position="187"/>
    </location>
</feature>
<feature type="region of interest" description="Small ATPAse domain (RuvB-S)" evidence="1">
    <location>
        <begin position="188"/>
        <end position="258"/>
    </location>
</feature>
<feature type="region of interest" description="Head domain (RuvB-H)" evidence="1">
    <location>
        <begin position="261"/>
        <end position="339"/>
    </location>
</feature>
<feature type="binding site" evidence="1">
    <location>
        <position position="26"/>
    </location>
    <ligand>
        <name>ATP</name>
        <dbReference type="ChEBI" id="CHEBI:30616"/>
    </ligand>
</feature>
<feature type="binding site" evidence="1">
    <location>
        <position position="27"/>
    </location>
    <ligand>
        <name>ATP</name>
        <dbReference type="ChEBI" id="CHEBI:30616"/>
    </ligand>
</feature>
<feature type="binding site" evidence="1">
    <location>
        <position position="68"/>
    </location>
    <ligand>
        <name>ATP</name>
        <dbReference type="ChEBI" id="CHEBI:30616"/>
    </ligand>
</feature>
<feature type="binding site" evidence="1">
    <location>
        <position position="71"/>
    </location>
    <ligand>
        <name>ATP</name>
        <dbReference type="ChEBI" id="CHEBI:30616"/>
    </ligand>
</feature>
<feature type="binding site" evidence="1">
    <location>
        <position position="72"/>
    </location>
    <ligand>
        <name>ATP</name>
        <dbReference type="ChEBI" id="CHEBI:30616"/>
    </ligand>
</feature>
<feature type="binding site" evidence="1">
    <location>
        <position position="72"/>
    </location>
    <ligand>
        <name>Mg(2+)</name>
        <dbReference type="ChEBI" id="CHEBI:18420"/>
    </ligand>
</feature>
<feature type="binding site" evidence="1">
    <location>
        <position position="73"/>
    </location>
    <ligand>
        <name>ATP</name>
        <dbReference type="ChEBI" id="CHEBI:30616"/>
    </ligand>
</feature>
<feature type="binding site" evidence="1">
    <location>
        <begin position="134"/>
        <end position="136"/>
    </location>
    <ligand>
        <name>ATP</name>
        <dbReference type="ChEBI" id="CHEBI:30616"/>
    </ligand>
</feature>
<feature type="binding site" evidence="1">
    <location>
        <position position="177"/>
    </location>
    <ligand>
        <name>ATP</name>
        <dbReference type="ChEBI" id="CHEBI:30616"/>
    </ligand>
</feature>
<feature type="binding site" evidence="1">
    <location>
        <position position="187"/>
    </location>
    <ligand>
        <name>ATP</name>
        <dbReference type="ChEBI" id="CHEBI:30616"/>
    </ligand>
</feature>
<feature type="binding site" evidence="1">
    <location>
        <position position="224"/>
    </location>
    <ligand>
        <name>ATP</name>
        <dbReference type="ChEBI" id="CHEBI:30616"/>
    </ligand>
</feature>
<feature type="binding site" evidence="1">
    <location>
        <position position="316"/>
    </location>
    <ligand>
        <name>DNA</name>
        <dbReference type="ChEBI" id="CHEBI:16991"/>
    </ligand>
</feature>
<feature type="binding site" evidence="1">
    <location>
        <position position="321"/>
    </location>
    <ligand>
        <name>DNA</name>
        <dbReference type="ChEBI" id="CHEBI:16991"/>
    </ligand>
</feature>
<dbReference type="EC" id="3.6.4.-" evidence="1"/>
<dbReference type="EMBL" id="AE017198">
    <property type="protein sequence ID" value="AAS08460.1"/>
    <property type="molecule type" value="Genomic_DNA"/>
</dbReference>
<dbReference type="RefSeq" id="WP_004895679.1">
    <property type="nucleotide sequence ID" value="NC_005362.1"/>
</dbReference>
<dbReference type="SMR" id="P61533"/>
<dbReference type="KEGG" id="ljo:LJ_0468"/>
<dbReference type="eggNOG" id="COG2255">
    <property type="taxonomic scope" value="Bacteria"/>
</dbReference>
<dbReference type="HOGENOM" id="CLU_055599_1_0_9"/>
<dbReference type="Proteomes" id="UP000000581">
    <property type="component" value="Chromosome"/>
</dbReference>
<dbReference type="GO" id="GO:0005737">
    <property type="term" value="C:cytoplasm"/>
    <property type="evidence" value="ECO:0007669"/>
    <property type="project" value="UniProtKB-SubCell"/>
</dbReference>
<dbReference type="GO" id="GO:0048476">
    <property type="term" value="C:Holliday junction resolvase complex"/>
    <property type="evidence" value="ECO:0007669"/>
    <property type="project" value="UniProtKB-UniRule"/>
</dbReference>
<dbReference type="GO" id="GO:0005524">
    <property type="term" value="F:ATP binding"/>
    <property type="evidence" value="ECO:0007669"/>
    <property type="project" value="UniProtKB-UniRule"/>
</dbReference>
<dbReference type="GO" id="GO:0016887">
    <property type="term" value="F:ATP hydrolysis activity"/>
    <property type="evidence" value="ECO:0007669"/>
    <property type="project" value="InterPro"/>
</dbReference>
<dbReference type="GO" id="GO:0000400">
    <property type="term" value="F:four-way junction DNA binding"/>
    <property type="evidence" value="ECO:0007669"/>
    <property type="project" value="UniProtKB-UniRule"/>
</dbReference>
<dbReference type="GO" id="GO:0009378">
    <property type="term" value="F:four-way junction helicase activity"/>
    <property type="evidence" value="ECO:0007669"/>
    <property type="project" value="InterPro"/>
</dbReference>
<dbReference type="GO" id="GO:0006310">
    <property type="term" value="P:DNA recombination"/>
    <property type="evidence" value="ECO:0007669"/>
    <property type="project" value="UniProtKB-UniRule"/>
</dbReference>
<dbReference type="GO" id="GO:0006281">
    <property type="term" value="P:DNA repair"/>
    <property type="evidence" value="ECO:0007669"/>
    <property type="project" value="UniProtKB-UniRule"/>
</dbReference>
<dbReference type="CDD" id="cd00009">
    <property type="entry name" value="AAA"/>
    <property type="match status" value="1"/>
</dbReference>
<dbReference type="Gene3D" id="1.10.8.60">
    <property type="match status" value="1"/>
</dbReference>
<dbReference type="Gene3D" id="3.40.50.300">
    <property type="entry name" value="P-loop containing nucleotide triphosphate hydrolases"/>
    <property type="match status" value="1"/>
</dbReference>
<dbReference type="Gene3D" id="1.10.10.10">
    <property type="entry name" value="Winged helix-like DNA-binding domain superfamily/Winged helix DNA-binding domain"/>
    <property type="match status" value="1"/>
</dbReference>
<dbReference type="HAMAP" id="MF_00016">
    <property type="entry name" value="DNA_HJ_migration_RuvB"/>
    <property type="match status" value="1"/>
</dbReference>
<dbReference type="InterPro" id="IPR003593">
    <property type="entry name" value="AAA+_ATPase"/>
</dbReference>
<dbReference type="InterPro" id="IPR041445">
    <property type="entry name" value="AAA_lid_4"/>
</dbReference>
<dbReference type="InterPro" id="IPR004605">
    <property type="entry name" value="DNA_helicase_Holl-junc_RuvB"/>
</dbReference>
<dbReference type="InterPro" id="IPR027417">
    <property type="entry name" value="P-loop_NTPase"/>
</dbReference>
<dbReference type="InterPro" id="IPR008824">
    <property type="entry name" value="RuvB-like_N"/>
</dbReference>
<dbReference type="InterPro" id="IPR008823">
    <property type="entry name" value="RuvB_C"/>
</dbReference>
<dbReference type="InterPro" id="IPR036388">
    <property type="entry name" value="WH-like_DNA-bd_sf"/>
</dbReference>
<dbReference type="InterPro" id="IPR036390">
    <property type="entry name" value="WH_DNA-bd_sf"/>
</dbReference>
<dbReference type="NCBIfam" id="NF000868">
    <property type="entry name" value="PRK00080.1"/>
    <property type="match status" value="1"/>
</dbReference>
<dbReference type="NCBIfam" id="TIGR00635">
    <property type="entry name" value="ruvB"/>
    <property type="match status" value="1"/>
</dbReference>
<dbReference type="PANTHER" id="PTHR42848">
    <property type="match status" value="1"/>
</dbReference>
<dbReference type="PANTHER" id="PTHR42848:SF1">
    <property type="entry name" value="HOLLIDAY JUNCTION BRANCH MIGRATION COMPLEX SUBUNIT RUVB"/>
    <property type="match status" value="1"/>
</dbReference>
<dbReference type="Pfam" id="PF17864">
    <property type="entry name" value="AAA_lid_4"/>
    <property type="match status" value="1"/>
</dbReference>
<dbReference type="Pfam" id="PF05491">
    <property type="entry name" value="RuvB_C"/>
    <property type="match status" value="1"/>
</dbReference>
<dbReference type="Pfam" id="PF05496">
    <property type="entry name" value="RuvB_N"/>
    <property type="match status" value="1"/>
</dbReference>
<dbReference type="SMART" id="SM00382">
    <property type="entry name" value="AAA"/>
    <property type="match status" value="1"/>
</dbReference>
<dbReference type="SUPFAM" id="SSF52540">
    <property type="entry name" value="P-loop containing nucleoside triphosphate hydrolases"/>
    <property type="match status" value="1"/>
</dbReference>
<dbReference type="SUPFAM" id="SSF46785">
    <property type="entry name" value="Winged helix' DNA-binding domain"/>
    <property type="match status" value="1"/>
</dbReference>
<reference key="1">
    <citation type="journal article" date="2004" name="Proc. Natl. Acad. Sci. U.S.A.">
        <title>The genome sequence of the probiotic intestinal bacterium Lactobacillus johnsonii NCC 533.</title>
        <authorList>
            <person name="Pridmore R.D."/>
            <person name="Berger B."/>
            <person name="Desiere F."/>
            <person name="Vilanova D."/>
            <person name="Barretto C."/>
            <person name="Pittet A.-C."/>
            <person name="Zwahlen M.-C."/>
            <person name="Rouvet M."/>
            <person name="Altermann E."/>
            <person name="Barrangou R."/>
            <person name="Mollet B."/>
            <person name="Mercenier A."/>
            <person name="Klaenhammer T."/>
            <person name="Arigoni F."/>
            <person name="Schell M.A."/>
        </authorList>
    </citation>
    <scope>NUCLEOTIDE SEQUENCE [LARGE SCALE GENOMIC DNA]</scope>
    <source>
        <strain>CNCM I-1225 / La1 / NCC 533</strain>
    </source>
</reference>
<gene>
    <name evidence="1" type="primary">ruvB</name>
    <name type="ordered locus">LJ_0468</name>
</gene>
<sequence>MKDVNEEERIIGAESSEEDETIELSLRPQLLAQYIGQDKVKSEMKIYIKAAKQRDEALDHVLLYGPPGLGKTTLAFVIANEMGVHLKSTSGPAIEKAGDLVALLSELNPGDVLFIDEIHRLAKPVEEVLYSAMEDFYIDIVVGEGQTTHAVHVPLPPFTLIGATTRAGQLSAPLRDRFGIIEHMQYYSVEDLEKIIQRSSVVFNTKIDPEAAIELARRSRGTPRVANRLLKRVRDFAEVKGEEAISLVTTKHSLHLLEVDDEGLDQTDRKLLRMMIENYGGGPVGIKTIAANVGEDTDTIEEVYEPYLLQKGFITRTPRGRSVTQKAYLQLGYPPKDEK</sequence>
<protein>
    <recommendedName>
        <fullName evidence="1">Holliday junction branch migration complex subunit RuvB</fullName>
        <ecNumber evidence="1">3.6.4.-</ecNumber>
    </recommendedName>
</protein>
<accession>P61533</accession>
<keyword id="KW-0067">ATP-binding</keyword>
<keyword id="KW-0963">Cytoplasm</keyword>
<keyword id="KW-0227">DNA damage</keyword>
<keyword id="KW-0233">DNA recombination</keyword>
<keyword id="KW-0234">DNA repair</keyword>
<keyword id="KW-0238">DNA-binding</keyword>
<keyword id="KW-0378">Hydrolase</keyword>
<keyword id="KW-0547">Nucleotide-binding</keyword>
<evidence type="ECO:0000255" key="1">
    <source>
        <dbReference type="HAMAP-Rule" id="MF_00016"/>
    </source>
</evidence>